<keyword id="KW-0004">4Fe-4S</keyword>
<keyword id="KW-0963">Cytoplasm</keyword>
<keyword id="KW-0408">Iron</keyword>
<keyword id="KW-0411">Iron-sulfur</keyword>
<keyword id="KW-0479">Metal-binding</keyword>
<keyword id="KW-0949">S-adenosyl-L-methionine</keyword>
<keyword id="KW-0808">Transferase</keyword>
<reference key="1">
    <citation type="journal article" date="2008" name="PLoS Genet.">
        <title>Complete genome sequence of the N2-fixing broad host range endophyte Klebsiella pneumoniae 342 and virulence predictions verified in mice.</title>
        <authorList>
            <person name="Fouts D.E."/>
            <person name="Tyler H.L."/>
            <person name="DeBoy R.T."/>
            <person name="Daugherty S."/>
            <person name="Ren Q."/>
            <person name="Badger J.H."/>
            <person name="Durkin A.S."/>
            <person name="Huot H."/>
            <person name="Shrivastava S."/>
            <person name="Kothari S."/>
            <person name="Dodson R.J."/>
            <person name="Mohamoud Y."/>
            <person name="Khouri H."/>
            <person name="Roesch L.F.W."/>
            <person name="Krogfelt K.A."/>
            <person name="Struve C."/>
            <person name="Triplett E.W."/>
            <person name="Methe B.A."/>
        </authorList>
    </citation>
    <scope>NUCLEOTIDE SEQUENCE [LARGE SCALE GENOMIC DNA]</scope>
    <source>
        <strain>342</strain>
    </source>
</reference>
<name>LIPA_KLEP3</name>
<evidence type="ECO:0000255" key="1">
    <source>
        <dbReference type="HAMAP-Rule" id="MF_00206"/>
    </source>
</evidence>
<evidence type="ECO:0000255" key="2">
    <source>
        <dbReference type="PROSITE-ProRule" id="PRU01266"/>
    </source>
</evidence>
<protein>
    <recommendedName>
        <fullName evidence="1">Lipoyl synthase</fullName>
        <ecNumber evidence="1">2.8.1.8</ecNumber>
    </recommendedName>
    <alternativeName>
        <fullName evidence="1">Lip-syn</fullName>
        <shortName evidence="1">LS</shortName>
    </alternativeName>
    <alternativeName>
        <fullName evidence="1">Lipoate synthase</fullName>
    </alternativeName>
    <alternativeName>
        <fullName evidence="1">Lipoic acid synthase</fullName>
    </alternativeName>
    <alternativeName>
        <fullName evidence="1">Sulfur insertion protein LipA</fullName>
    </alternativeName>
</protein>
<proteinExistence type="inferred from homology"/>
<feature type="chain" id="PRO_1000099608" description="Lipoyl synthase">
    <location>
        <begin position="1"/>
        <end position="321"/>
    </location>
</feature>
<feature type="domain" description="Radical SAM core" evidence="2">
    <location>
        <begin position="80"/>
        <end position="297"/>
    </location>
</feature>
<feature type="binding site" evidence="1">
    <location>
        <position position="68"/>
    </location>
    <ligand>
        <name>[4Fe-4S] cluster</name>
        <dbReference type="ChEBI" id="CHEBI:49883"/>
        <label>1</label>
    </ligand>
</feature>
<feature type="binding site" evidence="1">
    <location>
        <position position="73"/>
    </location>
    <ligand>
        <name>[4Fe-4S] cluster</name>
        <dbReference type="ChEBI" id="CHEBI:49883"/>
        <label>1</label>
    </ligand>
</feature>
<feature type="binding site" evidence="1">
    <location>
        <position position="79"/>
    </location>
    <ligand>
        <name>[4Fe-4S] cluster</name>
        <dbReference type="ChEBI" id="CHEBI:49883"/>
        <label>1</label>
    </ligand>
</feature>
<feature type="binding site" evidence="1">
    <location>
        <position position="94"/>
    </location>
    <ligand>
        <name>[4Fe-4S] cluster</name>
        <dbReference type="ChEBI" id="CHEBI:49883"/>
        <label>2</label>
        <note>4Fe-4S-S-AdoMet</note>
    </ligand>
</feature>
<feature type="binding site" evidence="1">
    <location>
        <position position="98"/>
    </location>
    <ligand>
        <name>[4Fe-4S] cluster</name>
        <dbReference type="ChEBI" id="CHEBI:49883"/>
        <label>2</label>
        <note>4Fe-4S-S-AdoMet</note>
    </ligand>
</feature>
<feature type="binding site" evidence="1">
    <location>
        <position position="101"/>
    </location>
    <ligand>
        <name>[4Fe-4S] cluster</name>
        <dbReference type="ChEBI" id="CHEBI:49883"/>
        <label>2</label>
        <note>4Fe-4S-S-AdoMet</note>
    </ligand>
</feature>
<feature type="binding site" evidence="1">
    <location>
        <position position="308"/>
    </location>
    <ligand>
        <name>[4Fe-4S] cluster</name>
        <dbReference type="ChEBI" id="CHEBI:49883"/>
        <label>1</label>
    </ligand>
</feature>
<accession>B5XZS6</accession>
<organism>
    <name type="scientific">Klebsiella pneumoniae (strain 342)</name>
    <dbReference type="NCBI Taxonomy" id="507522"/>
    <lineage>
        <taxon>Bacteria</taxon>
        <taxon>Pseudomonadati</taxon>
        <taxon>Pseudomonadota</taxon>
        <taxon>Gammaproteobacteria</taxon>
        <taxon>Enterobacterales</taxon>
        <taxon>Enterobacteriaceae</taxon>
        <taxon>Klebsiella/Raoultella group</taxon>
        <taxon>Klebsiella</taxon>
        <taxon>Klebsiella pneumoniae complex</taxon>
    </lineage>
</organism>
<gene>
    <name evidence="1" type="primary">lipA</name>
    <name type="ordered locus">KPK_3913</name>
</gene>
<sequence>MSKPIVMERGVKYRDADKMALIPVKNVATEREALLRKPEWMKIKLPADSSRIQGIKAAMRKNGLHSVCEEASCPNLAECFNHGTATFMILGAICTRRCPFCDVAHGRPVAPDANEPQKLAQTIADMGLRYVVVTSVDRDDLRDGGAQHFADCISAIREKNPSIKIETLVPDFRGRMDRALDILTVTPPDVFNHNLENVPRLYRQVRPGADYNWSLKLLERFKEAHPEIPTKSGLMVGLGETNDEIIEVMRDLRRHGVTMLTLGQYLQPSRHHLPVQRYVSPEEFEEMKAEAMAMGFTHAACGPFVRSSYHADLQAKGMEVK</sequence>
<dbReference type="EC" id="2.8.1.8" evidence="1"/>
<dbReference type="EMBL" id="CP000964">
    <property type="protein sequence ID" value="ACI11403.1"/>
    <property type="molecule type" value="Genomic_DNA"/>
</dbReference>
<dbReference type="SMR" id="B5XZS6"/>
<dbReference type="KEGG" id="kpe:KPK_3913"/>
<dbReference type="HOGENOM" id="CLU_033144_2_1_6"/>
<dbReference type="UniPathway" id="UPA00538">
    <property type="reaction ID" value="UER00593"/>
</dbReference>
<dbReference type="Proteomes" id="UP000001734">
    <property type="component" value="Chromosome"/>
</dbReference>
<dbReference type="GO" id="GO:0005737">
    <property type="term" value="C:cytoplasm"/>
    <property type="evidence" value="ECO:0007669"/>
    <property type="project" value="UniProtKB-SubCell"/>
</dbReference>
<dbReference type="GO" id="GO:0051539">
    <property type="term" value="F:4 iron, 4 sulfur cluster binding"/>
    <property type="evidence" value="ECO:0007669"/>
    <property type="project" value="UniProtKB-UniRule"/>
</dbReference>
<dbReference type="GO" id="GO:0016992">
    <property type="term" value="F:lipoate synthase activity"/>
    <property type="evidence" value="ECO:0007669"/>
    <property type="project" value="UniProtKB-UniRule"/>
</dbReference>
<dbReference type="GO" id="GO:0046872">
    <property type="term" value="F:metal ion binding"/>
    <property type="evidence" value="ECO:0007669"/>
    <property type="project" value="UniProtKB-KW"/>
</dbReference>
<dbReference type="CDD" id="cd01335">
    <property type="entry name" value="Radical_SAM"/>
    <property type="match status" value="1"/>
</dbReference>
<dbReference type="FunFam" id="3.20.20.70:FF:000023">
    <property type="entry name" value="Lipoyl synthase"/>
    <property type="match status" value="1"/>
</dbReference>
<dbReference type="Gene3D" id="3.20.20.70">
    <property type="entry name" value="Aldolase class I"/>
    <property type="match status" value="1"/>
</dbReference>
<dbReference type="HAMAP" id="MF_00206">
    <property type="entry name" value="Lipoyl_synth"/>
    <property type="match status" value="1"/>
</dbReference>
<dbReference type="InterPro" id="IPR013785">
    <property type="entry name" value="Aldolase_TIM"/>
</dbReference>
<dbReference type="InterPro" id="IPR006638">
    <property type="entry name" value="Elp3/MiaA/NifB-like_rSAM"/>
</dbReference>
<dbReference type="InterPro" id="IPR031691">
    <property type="entry name" value="LIAS_N"/>
</dbReference>
<dbReference type="InterPro" id="IPR003698">
    <property type="entry name" value="Lipoyl_synth"/>
</dbReference>
<dbReference type="InterPro" id="IPR007197">
    <property type="entry name" value="rSAM"/>
</dbReference>
<dbReference type="NCBIfam" id="TIGR00510">
    <property type="entry name" value="lipA"/>
    <property type="match status" value="1"/>
</dbReference>
<dbReference type="NCBIfam" id="NF004019">
    <property type="entry name" value="PRK05481.1"/>
    <property type="match status" value="1"/>
</dbReference>
<dbReference type="NCBIfam" id="NF009544">
    <property type="entry name" value="PRK12928.1"/>
    <property type="match status" value="1"/>
</dbReference>
<dbReference type="PANTHER" id="PTHR10949">
    <property type="entry name" value="LIPOYL SYNTHASE"/>
    <property type="match status" value="1"/>
</dbReference>
<dbReference type="PANTHER" id="PTHR10949:SF0">
    <property type="entry name" value="LIPOYL SYNTHASE, MITOCHONDRIAL"/>
    <property type="match status" value="1"/>
</dbReference>
<dbReference type="Pfam" id="PF16881">
    <property type="entry name" value="LIAS_N"/>
    <property type="match status" value="1"/>
</dbReference>
<dbReference type="Pfam" id="PF04055">
    <property type="entry name" value="Radical_SAM"/>
    <property type="match status" value="1"/>
</dbReference>
<dbReference type="PIRSF" id="PIRSF005963">
    <property type="entry name" value="Lipoyl_synth"/>
    <property type="match status" value="1"/>
</dbReference>
<dbReference type="SFLD" id="SFLDF00271">
    <property type="entry name" value="lipoyl_synthase"/>
    <property type="match status" value="1"/>
</dbReference>
<dbReference type="SFLD" id="SFLDG01058">
    <property type="entry name" value="lipoyl_synthase_like"/>
    <property type="match status" value="1"/>
</dbReference>
<dbReference type="SMART" id="SM00729">
    <property type="entry name" value="Elp3"/>
    <property type="match status" value="1"/>
</dbReference>
<dbReference type="SUPFAM" id="SSF102114">
    <property type="entry name" value="Radical SAM enzymes"/>
    <property type="match status" value="1"/>
</dbReference>
<dbReference type="PROSITE" id="PS51918">
    <property type="entry name" value="RADICAL_SAM"/>
    <property type="match status" value="1"/>
</dbReference>
<comment type="function">
    <text evidence="1">Catalyzes the radical-mediated insertion of two sulfur atoms into the C-6 and C-8 positions of the octanoyl moiety bound to the lipoyl domains of lipoate-dependent enzymes, thereby converting the octanoylated domains into lipoylated derivatives.</text>
</comment>
<comment type="catalytic activity">
    <reaction evidence="1">
        <text>[[Fe-S] cluster scaffold protein carrying a second [4Fe-4S](2+) cluster] + N(6)-octanoyl-L-lysyl-[protein] + 2 oxidized [2Fe-2S]-[ferredoxin] + 2 S-adenosyl-L-methionine + 4 H(+) = [[Fe-S] cluster scaffold protein] + N(6)-[(R)-dihydrolipoyl]-L-lysyl-[protein] + 4 Fe(3+) + 2 hydrogen sulfide + 2 5'-deoxyadenosine + 2 L-methionine + 2 reduced [2Fe-2S]-[ferredoxin]</text>
        <dbReference type="Rhea" id="RHEA:16585"/>
        <dbReference type="Rhea" id="RHEA-COMP:9928"/>
        <dbReference type="Rhea" id="RHEA-COMP:10000"/>
        <dbReference type="Rhea" id="RHEA-COMP:10001"/>
        <dbReference type="Rhea" id="RHEA-COMP:10475"/>
        <dbReference type="Rhea" id="RHEA-COMP:14568"/>
        <dbReference type="Rhea" id="RHEA-COMP:14569"/>
        <dbReference type="ChEBI" id="CHEBI:15378"/>
        <dbReference type="ChEBI" id="CHEBI:17319"/>
        <dbReference type="ChEBI" id="CHEBI:29034"/>
        <dbReference type="ChEBI" id="CHEBI:29919"/>
        <dbReference type="ChEBI" id="CHEBI:33722"/>
        <dbReference type="ChEBI" id="CHEBI:33737"/>
        <dbReference type="ChEBI" id="CHEBI:33738"/>
        <dbReference type="ChEBI" id="CHEBI:57844"/>
        <dbReference type="ChEBI" id="CHEBI:59789"/>
        <dbReference type="ChEBI" id="CHEBI:78809"/>
        <dbReference type="ChEBI" id="CHEBI:83100"/>
        <dbReference type="EC" id="2.8.1.8"/>
    </reaction>
</comment>
<comment type="cofactor">
    <cofactor evidence="1">
        <name>[4Fe-4S] cluster</name>
        <dbReference type="ChEBI" id="CHEBI:49883"/>
    </cofactor>
    <text evidence="1">Binds 2 [4Fe-4S] clusters per subunit. One cluster is coordinated with 3 cysteines and an exchangeable S-adenosyl-L-methionine.</text>
</comment>
<comment type="pathway">
    <text evidence="1">Protein modification; protein lipoylation via endogenous pathway; protein N(6)-(lipoyl)lysine from octanoyl-[acyl-carrier-protein]: step 2/2.</text>
</comment>
<comment type="subcellular location">
    <subcellularLocation>
        <location evidence="1">Cytoplasm</location>
    </subcellularLocation>
</comment>
<comment type="similarity">
    <text evidence="1">Belongs to the radical SAM superfamily. Lipoyl synthase family.</text>
</comment>